<gene>
    <name evidence="5" type="primary">F6H2-1-1</name>
</gene>
<name>F6H21_IPOBA</name>
<reference key="1">
    <citation type="journal article" date="2012" name="Phytochemistry">
        <title>Molecular cloning and functional analysis of the ortho-hydroxylases of p-coumaroyl coenzyme A/feruloyl coenzyme A involved in formation of umbelliferone and scopoletin in sweet potato, Ipomoea batatas (L.) Lam.</title>
        <authorList>
            <person name="Matsumoto S."/>
            <person name="Mizutani M."/>
            <person name="Sakata K."/>
            <person name="Shimizu B."/>
        </authorList>
    </citation>
    <scope>NUCLEOTIDE SEQUENCE [MRNA]</scope>
    <scope>FUNCTION</scope>
    <scope>CATALYTIC ACTIVITY</scope>
    <scope>BIOPHYSICOCHEMICAL PROPERTIES</scope>
    <scope>INDUCTION BY FUNGAL AND CHITOSAN TREATMENTS</scope>
    <scope>TISSUE SPECIFICITY</scope>
    <source>
        <tissue>Root tuber</tissue>
    </source>
</reference>
<proteinExistence type="evidence at protein level"/>
<evidence type="ECO:0000250" key="1">
    <source>
        <dbReference type="UniProtKB" id="D4N500"/>
    </source>
</evidence>
<evidence type="ECO:0000250" key="2">
    <source>
        <dbReference type="UniProtKB" id="Q9C899"/>
    </source>
</evidence>
<evidence type="ECO:0000255" key="3">
    <source>
        <dbReference type="PROSITE-ProRule" id="PRU00805"/>
    </source>
</evidence>
<evidence type="ECO:0000269" key="4">
    <source>
    </source>
</evidence>
<evidence type="ECO:0000303" key="5">
    <source>
    </source>
</evidence>
<evidence type="ECO:0000305" key="6"/>
<feature type="chain" id="PRO_0000447356" description="Bi-functional coumaroyl CoA and feruloyl CoA ortho-hydroxylase F6H2-1-1">
    <location>
        <begin position="1"/>
        <end position="358"/>
    </location>
</feature>
<feature type="domain" description="Fe2OG dioxygenase" evidence="3">
    <location>
        <begin position="207"/>
        <end position="308"/>
    </location>
</feature>
<feature type="binding site" evidence="1">
    <location>
        <position position="216"/>
    </location>
    <ligand>
        <name>2-oxoglutarate</name>
        <dbReference type="ChEBI" id="CHEBI:16810"/>
    </ligand>
</feature>
<feature type="binding site" evidence="3">
    <location>
        <position position="231"/>
    </location>
    <ligand>
        <name>Fe cation</name>
        <dbReference type="ChEBI" id="CHEBI:24875"/>
    </ligand>
</feature>
<feature type="binding site" evidence="3">
    <location>
        <position position="233"/>
    </location>
    <ligand>
        <name>Fe cation</name>
        <dbReference type="ChEBI" id="CHEBI:24875"/>
    </ligand>
</feature>
<feature type="binding site" evidence="3">
    <location>
        <position position="289"/>
    </location>
    <ligand>
        <name>Fe cation</name>
        <dbReference type="ChEBI" id="CHEBI:24875"/>
    </ligand>
</feature>
<feature type="binding site" evidence="3">
    <location>
        <position position="299"/>
    </location>
    <ligand>
        <name>2-oxoglutarate</name>
        <dbReference type="ChEBI" id="CHEBI:16810"/>
    </ligand>
</feature>
<feature type="binding site" evidence="1">
    <location>
        <position position="301"/>
    </location>
    <ligand>
        <name>2-oxoglutarate</name>
        <dbReference type="ChEBI" id="CHEBI:16810"/>
    </ligand>
</feature>
<sequence>MPSTTLSTVLSDINEFVVKQGHGVKGLSELGLQTLPNQYVHPPEERLSSMDVVSDDSIPVIDVSNWEDPKVAKLICDAAEKRGFFQIVNHGIPLEMLEKAKAATYRFFREPAEEKKKYSKENCPTSHVRYSTSFLPQIEKALEWKDHLSMFYVSDEEAAQYWPPSCRDDALEYLKSCEMVSRKLLEALMQGLNVNEIDDAKESLLMGSRRININYYPKCPNPDLTVGVGRHSDISTLTLLLQDDIGGLYVRKLEHEAWSHVPPVKGALVINIGDALQIMSNGRYKSIEHRVLANETNDRISVPVFVNPKPNDIVGPLPEVLASGEKPVYKPVLYSDYAKHFYRKAHNGKDTIAFARIE</sequence>
<keyword id="KW-0223">Dioxygenase</keyword>
<keyword id="KW-0408">Iron</keyword>
<keyword id="KW-0479">Metal-binding</keyword>
<keyword id="KW-0560">Oxidoreductase</keyword>
<accession>G9M9M4</accession>
<organism>
    <name type="scientific">Ipomoea batatas</name>
    <name type="common">Sweet potato</name>
    <name type="synonym">Convolvulus batatas</name>
    <dbReference type="NCBI Taxonomy" id="4120"/>
    <lineage>
        <taxon>Eukaryota</taxon>
        <taxon>Viridiplantae</taxon>
        <taxon>Streptophyta</taxon>
        <taxon>Embryophyta</taxon>
        <taxon>Tracheophyta</taxon>
        <taxon>Spermatophyta</taxon>
        <taxon>Magnoliopsida</taxon>
        <taxon>eudicotyledons</taxon>
        <taxon>Gunneridae</taxon>
        <taxon>Pentapetalae</taxon>
        <taxon>asterids</taxon>
        <taxon>lamiids</taxon>
        <taxon>Solanales</taxon>
        <taxon>Convolvulaceae</taxon>
        <taxon>Ipomoeeae</taxon>
        <taxon>Ipomoea</taxon>
    </lineage>
</organism>
<dbReference type="EC" id="1.14.11.61" evidence="3 4"/>
<dbReference type="EC" id="1.14.11.62" evidence="3 4"/>
<dbReference type="EMBL" id="AB636153">
    <property type="protein sequence ID" value="BAL22347.1"/>
    <property type="molecule type" value="mRNA"/>
</dbReference>
<dbReference type="SMR" id="G9M9M4"/>
<dbReference type="KEGG" id="ag:BAL22347"/>
<dbReference type="BioCyc" id="MetaCyc:MONOMER-18295"/>
<dbReference type="GO" id="GO:0016706">
    <property type="term" value="F:2-oxoglutarate-dependent dioxygenase activity"/>
    <property type="evidence" value="ECO:0000314"/>
    <property type="project" value="UniProtKB"/>
</dbReference>
<dbReference type="GO" id="GO:0102312">
    <property type="term" value="F:4-coumaroyl 2'-hydroxylase activity"/>
    <property type="evidence" value="ECO:0007669"/>
    <property type="project" value="UniProtKB-EC"/>
</dbReference>
<dbReference type="GO" id="GO:0046872">
    <property type="term" value="F:metal ion binding"/>
    <property type="evidence" value="ECO:0007669"/>
    <property type="project" value="UniProtKB-KW"/>
</dbReference>
<dbReference type="GO" id="GO:0009805">
    <property type="term" value="P:coumarin biosynthetic process"/>
    <property type="evidence" value="ECO:0000314"/>
    <property type="project" value="UniProtKB"/>
</dbReference>
<dbReference type="GO" id="GO:0009699">
    <property type="term" value="P:phenylpropanoid biosynthetic process"/>
    <property type="evidence" value="ECO:0000314"/>
    <property type="project" value="UniProtKB"/>
</dbReference>
<dbReference type="GO" id="GO:0009620">
    <property type="term" value="P:response to fungus"/>
    <property type="evidence" value="ECO:0000270"/>
    <property type="project" value="UniProtKB"/>
</dbReference>
<dbReference type="GO" id="GO:0002238">
    <property type="term" value="P:response to molecule of fungal origin"/>
    <property type="evidence" value="ECO:0000270"/>
    <property type="project" value="UniProtKB"/>
</dbReference>
<dbReference type="FunFam" id="2.60.120.330:FF:000023">
    <property type="entry name" value="Feruloyl CoA ortho-hydroxylase 1"/>
    <property type="match status" value="1"/>
</dbReference>
<dbReference type="Gene3D" id="2.60.120.330">
    <property type="entry name" value="B-lactam Antibiotic, Isopenicillin N Synthase, Chain"/>
    <property type="match status" value="1"/>
</dbReference>
<dbReference type="InterPro" id="IPR026992">
    <property type="entry name" value="DIOX_N"/>
</dbReference>
<dbReference type="InterPro" id="IPR044861">
    <property type="entry name" value="IPNS-like_FE2OG_OXY"/>
</dbReference>
<dbReference type="InterPro" id="IPR027443">
    <property type="entry name" value="IPNS-like_sf"/>
</dbReference>
<dbReference type="InterPro" id="IPR005123">
    <property type="entry name" value="Oxoglu/Fe-dep_dioxygenase_dom"/>
</dbReference>
<dbReference type="PANTHER" id="PTHR10209:SF243">
    <property type="entry name" value="FERULOYL COA ORTHO-HYDROXYLASE 1-RELATED"/>
    <property type="match status" value="1"/>
</dbReference>
<dbReference type="PANTHER" id="PTHR10209">
    <property type="entry name" value="OXIDOREDUCTASE, 2OG-FE II OXYGENASE FAMILY PROTEIN"/>
    <property type="match status" value="1"/>
</dbReference>
<dbReference type="Pfam" id="PF03171">
    <property type="entry name" value="2OG-FeII_Oxy"/>
    <property type="match status" value="1"/>
</dbReference>
<dbReference type="Pfam" id="PF14226">
    <property type="entry name" value="DIOX_N"/>
    <property type="match status" value="1"/>
</dbReference>
<dbReference type="SUPFAM" id="SSF51197">
    <property type="entry name" value="Clavaminate synthase-like"/>
    <property type="match status" value="1"/>
</dbReference>
<dbReference type="PROSITE" id="PS51471">
    <property type="entry name" value="FE2OG_OXY"/>
    <property type="match status" value="1"/>
</dbReference>
<protein>
    <recommendedName>
        <fullName evidence="5">Bi-functional coumaroyl CoA and feruloyl CoA ortho-hydroxylase F6H2-1-1</fullName>
        <shortName evidence="5">IbF6H2-1-1</shortName>
        <ecNumber evidence="3 4">1.14.11.61</ecNumber>
        <ecNumber evidence="3 4">1.14.11.62</ecNumber>
    </recommendedName>
    <alternativeName>
        <fullName evidence="5">2-oxoglutarate-dependent dioxygenase F6H2-1-1</fullName>
        <shortName evidence="5">2OGD F6H2-1-1</shortName>
    </alternativeName>
</protein>
<comment type="function">
    <text evidence="4">2-oxoglutarate (OG)- and Fe(II)-dependent dioxygenase (2OGD) involved in scopoletin and umbelliferone biosynthesis (PubMed:22169019). Converts feruloyl CoA into 6'-hydroxyferuloyl CoA, and p-coumaroyl CoA into 2,4-dihydroxycinnamoyl-CoA, but has no activity with caffeoyl-CoA (PubMed:22169019).</text>
</comment>
<comment type="catalytic activity">
    <reaction evidence="4">
        <text>(E)-4-coumaroyl-CoA + 2-oxoglutarate + O2 = (E)-2,4-dihydroxycinnamoyl-CoA + succinate + CO2</text>
        <dbReference type="Rhea" id="RHEA:57868"/>
        <dbReference type="ChEBI" id="CHEBI:15379"/>
        <dbReference type="ChEBI" id="CHEBI:16526"/>
        <dbReference type="ChEBI" id="CHEBI:16810"/>
        <dbReference type="ChEBI" id="CHEBI:30031"/>
        <dbReference type="ChEBI" id="CHEBI:85008"/>
        <dbReference type="ChEBI" id="CHEBI:142398"/>
        <dbReference type="EC" id="1.14.11.62"/>
    </reaction>
</comment>
<comment type="catalytic activity">
    <reaction evidence="4">
        <text>(E)-feruloyl-CoA + 2-oxoglutarate + O2 = (E)-6-hydroxyferuloyl-CoA + succinate + CO2</text>
        <dbReference type="Rhea" id="RHEA:57856"/>
        <dbReference type="ChEBI" id="CHEBI:15379"/>
        <dbReference type="ChEBI" id="CHEBI:16526"/>
        <dbReference type="ChEBI" id="CHEBI:16810"/>
        <dbReference type="ChEBI" id="CHEBI:30031"/>
        <dbReference type="ChEBI" id="CHEBI:87305"/>
        <dbReference type="ChEBI" id="CHEBI:142390"/>
        <dbReference type="EC" id="1.14.11.61"/>
    </reaction>
</comment>
<comment type="cofactor">
    <cofactor evidence="2">
        <name>L-ascorbate</name>
        <dbReference type="ChEBI" id="CHEBI:38290"/>
    </cofactor>
</comment>
<comment type="cofactor">
    <cofactor evidence="3">
        <name>Fe(2+)</name>
        <dbReference type="ChEBI" id="CHEBI:29033"/>
    </cofactor>
    <text evidence="3">Binds 1 Fe(2+) ion per subunit.</text>
</comment>
<comment type="biophysicochemical properties">
    <kinetics>
        <KM evidence="4">14.06 uM for feruloyl-CoA</KM>
        <KM evidence="4">15.25 uM for p-Coumaroyl-CoA</KM>
        <text evidence="4">kcat is 0.55 sec(-1) with feruloyl-CoA as substrate. kcat is 0.64 sec(-1) with p-Coumaroyl-CoA as substrate.</text>
    </kinetics>
    <phDependence>
        <text evidence="4">Optimum pH is 7.2.</text>
    </phDependence>
</comment>
<comment type="pathway">
    <text evidence="4">Phenylpropanoid metabolism.</text>
</comment>
<comment type="tissue specificity">
    <text evidence="4">Mostly expressed in underground stems and stems, and, at low levels, in tubers, leaves and petioles.</text>
</comment>
<comment type="induction">
    <text evidence="4">Transiently induced by fungal (F.oxysporum f.sp. batatas O-17) and chitosan treatments, in association with the accumulation of umbelliferone and its glucoside (skimmin) in the tubers.</text>
</comment>
<comment type="similarity">
    <text evidence="6">Belongs to the iron/ascorbate-dependent oxidoreductase family.</text>
</comment>